<name>AMYL_LACAM</name>
<reference key="1">
    <citation type="journal article" date="2004" name="Int. J. Food Microbiol.">
        <title>The lactobin A and amylovorin L471 encoding genes are identical, and their distribution seems to be restricted to the species Lactobacillus amylovorus that is of interest for cereal fermentations.</title>
        <authorList>
            <person name="De Vuyst L."/>
            <person name="Avonts L."/>
            <person name="Neysens P."/>
            <person name="Hoste B."/>
            <person name="Vancanneyt M."/>
            <person name="Swings J."/>
            <person name="Callewaert R."/>
        </authorList>
    </citation>
    <scope>NUCLEOTIDE SEQUENCE [GENOMIC DNA]</scope>
    <source>
        <strain>LMG P-13139</strain>
    </source>
</reference>
<reference key="2">
    <citation type="journal article" date="1997" name="Appl. Environ. Microbiol.">
        <title>Isolation, purification, and amino acid sequence of lactobin A, one of the two bacteriocins produced by Lactobacillus amylovorus LMG P-13139.</title>
        <authorList>
            <person name="Contreras B.G.L."/>
            <person name="De Vuyst L."/>
            <person name="Devreese B."/>
            <person name="Busanyova K."/>
            <person name="Raymaeckers J."/>
            <person name="Bosman F."/>
            <person name="Sablon E."/>
            <person name="Vandamme E.J."/>
        </authorList>
    </citation>
    <scope>PROTEIN SEQUENCE OF 16-65</scope>
    <scope>MASS SPECTROMETRY</scope>
    <source>
        <strain>LMG P-13139</strain>
    </source>
</reference>
<reference key="3">
    <citation type="journal article" date="1999" name="Microbiology">
        <title>Characterization and production of amylovorin L471, a bacteriocin purified from Lactobacillus amylovorus DCE 471 by a novel three-step method.</title>
        <authorList>
            <person name="Callewaert R."/>
            <person name="Holo H."/>
            <person name="Devreese B."/>
            <person name="Van Beeumen J."/>
            <person name="Nes I."/>
            <person name="De Vuyst L."/>
        </authorList>
    </citation>
    <scope>PROTEIN SEQUENCE OF 16-50</scope>
    <source>
        <strain>DCE 471</strain>
    </source>
</reference>
<keyword id="KW-0044">Antibiotic</keyword>
<keyword id="KW-0929">Antimicrobial</keyword>
<keyword id="KW-0078">Bacteriocin</keyword>
<keyword id="KW-0903">Direct protein sequencing</keyword>
<keyword id="KW-1032">Host cell membrane</keyword>
<keyword id="KW-1043">Host membrane</keyword>
<keyword id="KW-0472">Membrane</keyword>
<keyword id="KW-0964">Secreted</keyword>
<keyword id="KW-0812">Transmembrane</keyword>
<keyword id="KW-1133">Transmembrane helix</keyword>
<evidence type="ECO:0000255" key="1"/>
<evidence type="ECO:0000269" key="2">
    <source>
    </source>
</evidence>
<evidence type="ECO:0000269" key="3">
    <source>
    </source>
</evidence>
<evidence type="ECO:0000305" key="4"/>
<proteinExistence type="evidence at protein level"/>
<gene>
    <name type="primary">amyL</name>
</gene>
<sequence length="65" mass="6537">MKQLNSEQLQNIIGGNRWTNAYSAALGCAVPGVKYGKKLGGVWGAVIGGVGGAAVCGLAGYVRKG</sequence>
<protein>
    <recommendedName>
        <fullName>Bacteriocin amylovorin-L</fullName>
    </recommendedName>
    <alternativeName>
        <fullName>Amylovorin-L471</fullName>
    </alternativeName>
    <alternativeName>
        <fullName>Lactobin-A</fullName>
    </alternativeName>
</protein>
<dbReference type="EMBL" id="AJ301625">
    <property type="protein sequence ID" value="CAC82814.1"/>
    <property type="molecule type" value="Genomic_DNA"/>
</dbReference>
<dbReference type="RefSeq" id="WP_013642497.1">
    <property type="nucleotide sequence ID" value="NZ_CP029754.1"/>
</dbReference>
<dbReference type="STRING" id="1604.LAC30SC_09775"/>
<dbReference type="TCDB" id="1.C.22.1.8">
    <property type="family name" value="the lactococcin a (lactococcin a) family"/>
</dbReference>
<dbReference type="GO" id="GO:0005576">
    <property type="term" value="C:extracellular region"/>
    <property type="evidence" value="ECO:0007669"/>
    <property type="project" value="UniProtKB-SubCell"/>
</dbReference>
<dbReference type="GO" id="GO:0020002">
    <property type="term" value="C:host cell plasma membrane"/>
    <property type="evidence" value="ECO:0007669"/>
    <property type="project" value="UniProtKB-SubCell"/>
</dbReference>
<dbReference type="GO" id="GO:0016020">
    <property type="term" value="C:membrane"/>
    <property type="evidence" value="ECO:0007669"/>
    <property type="project" value="UniProtKB-KW"/>
</dbReference>
<dbReference type="GO" id="GO:0042742">
    <property type="term" value="P:defense response to bacterium"/>
    <property type="evidence" value="ECO:0007669"/>
    <property type="project" value="UniProtKB-KW"/>
</dbReference>
<dbReference type="GO" id="GO:0031640">
    <property type="term" value="P:killing of cells of another organism"/>
    <property type="evidence" value="ECO:0007669"/>
    <property type="project" value="UniProtKB-KW"/>
</dbReference>
<dbReference type="InterPro" id="IPR019493">
    <property type="entry name" value="Bacteriocin_IIb_lactacin-rel"/>
</dbReference>
<dbReference type="InterPro" id="IPR010133">
    <property type="entry name" value="Bacteriocin_signal_seq"/>
</dbReference>
<dbReference type="NCBIfam" id="TIGR01847">
    <property type="entry name" value="bacteriocin_sig"/>
    <property type="match status" value="1"/>
</dbReference>
<dbReference type="Pfam" id="PF10439">
    <property type="entry name" value="Bacteriocin_IIc"/>
    <property type="match status" value="1"/>
</dbReference>
<accession>P80696</accession>
<accession>P81927</accession>
<accession>Q8GC39</accession>
<organism>
    <name type="scientific">Lactobacillus amylovorus</name>
    <dbReference type="NCBI Taxonomy" id="1604"/>
    <lineage>
        <taxon>Bacteria</taxon>
        <taxon>Bacillati</taxon>
        <taxon>Bacillota</taxon>
        <taxon>Bacilli</taxon>
        <taxon>Lactobacillales</taxon>
        <taxon>Lactobacillaceae</taxon>
        <taxon>Lactobacillus</taxon>
    </lineage>
</organism>
<feature type="propeptide" id="PRO_0000002757" evidence="2 3">
    <location>
        <begin position="1"/>
        <end position="15"/>
    </location>
</feature>
<feature type="chain" id="PRO_0000002758" description="Bacteriocin amylovorin-L">
    <location>
        <begin position="16"/>
        <end position="65"/>
    </location>
</feature>
<feature type="transmembrane region" description="Helical" evidence="1">
    <location>
        <begin position="39"/>
        <end position="59"/>
    </location>
</feature>
<comment type="function">
    <text>This heat stable bacteriocin inhibits the growth of closely related Lactobacillus species. It may act as a pore-forming protein, creating a channel in the cell membrane. It kills Lactobacillus helveticus ATCC 15009, but displays no activity towards Listeria species.</text>
</comment>
<comment type="subunit">
    <text>Active lactobin is composed of two different peptides, one which is lactobin A.</text>
</comment>
<comment type="subcellular location">
    <subcellularLocation>
        <location>Secreted</location>
    </subcellularLocation>
    <subcellularLocation>
        <location evidence="4">Host cell membrane</location>
        <topology evidence="4">Single-pass membrane protein</topology>
    </subcellularLocation>
</comment>
<comment type="mass spectrometry" mass="4879.0" error="0.69" method="Electrospray" evidence="3"/>
<comment type="similarity">
    <text evidence="4">Belongs to the bacteriocin class IIB family.</text>
</comment>